<dbReference type="EC" id="3.6.1.-" evidence="3 5"/>
<dbReference type="EC" id="3.6.1.22" evidence="1"/>
<dbReference type="EMBL" id="AK002641">
    <property type="protein sequence ID" value="BAB22253.1"/>
    <property type="molecule type" value="mRNA"/>
</dbReference>
<dbReference type="EMBL" id="BC057657">
    <property type="protein sequence ID" value="AAH57657.1"/>
    <property type="molecule type" value="mRNA"/>
</dbReference>
<dbReference type="CCDS" id="CCDS28933.1">
    <molecule id="Q9DCN1-1"/>
</dbReference>
<dbReference type="RefSeq" id="NP_080773.1">
    <molecule id="Q9DCN1-1"/>
    <property type="nucleotide sequence ID" value="NM_026497.3"/>
</dbReference>
<dbReference type="PDB" id="6O3P">
    <property type="method" value="X-ray"/>
    <property type="resolution" value="1.60 A"/>
    <property type="chains" value="A/B=126-460"/>
</dbReference>
<dbReference type="PDBsum" id="6O3P"/>
<dbReference type="SMR" id="Q9DCN1"/>
<dbReference type="BioGRID" id="212586">
    <property type="interactions" value="1"/>
</dbReference>
<dbReference type="FunCoup" id="Q9DCN1">
    <property type="interactions" value="1168"/>
</dbReference>
<dbReference type="STRING" id="10090.ENSMUSP00000025065"/>
<dbReference type="GlyGen" id="Q9DCN1">
    <property type="glycosylation" value="1 site, 1 O-linked glycan (1 site)"/>
</dbReference>
<dbReference type="iPTMnet" id="Q9DCN1"/>
<dbReference type="PhosphoSitePlus" id="Q9DCN1"/>
<dbReference type="SwissPalm" id="Q9DCN1"/>
<dbReference type="jPOST" id="Q9DCN1"/>
<dbReference type="PaxDb" id="10090-ENSMUSP00000025065"/>
<dbReference type="PeptideAtlas" id="Q9DCN1"/>
<dbReference type="ProteomicsDB" id="293806">
    <molecule id="Q9DCN1-1"/>
</dbReference>
<dbReference type="ProteomicsDB" id="293807">
    <molecule id="Q9DCN1-2"/>
</dbReference>
<dbReference type="Pumba" id="Q9DCN1"/>
<dbReference type="Antibodypedia" id="25275">
    <property type="antibodies" value="198 antibodies from 25 providers"/>
</dbReference>
<dbReference type="DNASU" id="67993"/>
<dbReference type="Ensembl" id="ENSMUST00000025065.12">
    <molecule id="Q9DCN1-1"/>
    <property type="protein sequence ID" value="ENSMUSP00000025065.6"/>
    <property type="gene ID" value="ENSMUSG00000024228.13"/>
</dbReference>
<dbReference type="Ensembl" id="ENSMUST00000174122.2">
    <molecule id="Q9DCN1-2"/>
    <property type="protein sequence ID" value="ENSMUSP00000133678.2"/>
    <property type="gene ID" value="ENSMUSG00000024228.13"/>
</dbReference>
<dbReference type="GeneID" id="67993"/>
<dbReference type="KEGG" id="mmu:67993"/>
<dbReference type="UCSC" id="uc008dfc.1">
    <molecule id="Q9DCN1-1"/>
    <property type="organism name" value="mouse"/>
</dbReference>
<dbReference type="UCSC" id="uc008dfd.1">
    <molecule id="Q9DCN1-2"/>
    <property type="organism name" value="mouse"/>
</dbReference>
<dbReference type="AGR" id="MGI:1915243"/>
<dbReference type="CTD" id="83594"/>
<dbReference type="MGI" id="MGI:1915243">
    <property type="gene designation" value="Nudt12"/>
</dbReference>
<dbReference type="VEuPathDB" id="HostDB:ENSMUSG00000024228"/>
<dbReference type="eggNOG" id="KOG0504">
    <property type="taxonomic scope" value="Eukaryota"/>
</dbReference>
<dbReference type="eggNOG" id="KOG3084">
    <property type="taxonomic scope" value="Eukaryota"/>
</dbReference>
<dbReference type="GeneTree" id="ENSGT00940000157592"/>
<dbReference type="HOGENOM" id="CLU_037162_0_2_1"/>
<dbReference type="InParanoid" id="Q9DCN1"/>
<dbReference type="OMA" id="CNTRTTL"/>
<dbReference type="OrthoDB" id="10249612at2759"/>
<dbReference type="PhylomeDB" id="Q9DCN1"/>
<dbReference type="TreeFam" id="TF106352"/>
<dbReference type="Reactome" id="R-MMU-197264">
    <property type="pathway name" value="Nicotinamide salvaging"/>
</dbReference>
<dbReference type="BioGRID-ORCS" id="67993">
    <property type="hits" value="5 hits in 79 CRISPR screens"/>
</dbReference>
<dbReference type="PRO" id="PR:Q9DCN1"/>
<dbReference type="Proteomes" id="UP000000589">
    <property type="component" value="Chromosome 17"/>
</dbReference>
<dbReference type="RNAct" id="Q9DCN1">
    <property type="molecule type" value="protein"/>
</dbReference>
<dbReference type="Bgee" id="ENSMUSG00000024228">
    <property type="expression patterns" value="Expressed in left lobe of liver and 222 other cell types or tissues"/>
</dbReference>
<dbReference type="GO" id="GO:0005737">
    <property type="term" value="C:cytoplasm"/>
    <property type="evidence" value="ECO:0000266"/>
    <property type="project" value="MGI"/>
</dbReference>
<dbReference type="GO" id="GO:0005634">
    <property type="term" value="C:nucleus"/>
    <property type="evidence" value="ECO:0007669"/>
    <property type="project" value="Ensembl"/>
</dbReference>
<dbReference type="GO" id="GO:0005777">
    <property type="term" value="C:peroxisome"/>
    <property type="evidence" value="ECO:0000266"/>
    <property type="project" value="MGI"/>
</dbReference>
<dbReference type="GO" id="GO:0000287">
    <property type="term" value="F:magnesium ion binding"/>
    <property type="evidence" value="ECO:0000314"/>
    <property type="project" value="UniProtKB"/>
</dbReference>
<dbReference type="GO" id="GO:0000210">
    <property type="term" value="F:NAD+ diphosphatase activity"/>
    <property type="evidence" value="ECO:0000266"/>
    <property type="project" value="MGI"/>
</dbReference>
<dbReference type="GO" id="GO:0035529">
    <property type="term" value="F:NADH pyrophosphatase activity"/>
    <property type="evidence" value="ECO:0000266"/>
    <property type="project" value="MGI"/>
</dbReference>
<dbReference type="GO" id="GO:0010943">
    <property type="term" value="F:NADPH pyrophosphatase activity"/>
    <property type="evidence" value="ECO:0007669"/>
    <property type="project" value="RHEA"/>
</dbReference>
<dbReference type="GO" id="GO:1990174">
    <property type="term" value="F:phosphodiesterase decapping endonuclease activity"/>
    <property type="evidence" value="ECO:0007669"/>
    <property type="project" value="Ensembl"/>
</dbReference>
<dbReference type="GO" id="GO:0110153">
    <property type="term" value="F:RNA NAD-cap (NMN-forming) hydrolase activity"/>
    <property type="evidence" value="ECO:0000314"/>
    <property type="project" value="UniProtKB"/>
</dbReference>
<dbReference type="GO" id="GO:0008270">
    <property type="term" value="F:zinc ion binding"/>
    <property type="evidence" value="ECO:0000314"/>
    <property type="project" value="UniProtKB"/>
</dbReference>
<dbReference type="GO" id="GO:0032922">
    <property type="term" value="P:circadian regulation of gene expression"/>
    <property type="evidence" value="ECO:0000315"/>
    <property type="project" value="UniProtKB"/>
</dbReference>
<dbReference type="GO" id="GO:0006402">
    <property type="term" value="P:mRNA catabolic process"/>
    <property type="evidence" value="ECO:0000314"/>
    <property type="project" value="UniProtKB"/>
</dbReference>
<dbReference type="GO" id="GO:0110156">
    <property type="term" value="P:mRNA methylguanosine-cap decapping"/>
    <property type="evidence" value="ECO:0007669"/>
    <property type="project" value="Ensembl"/>
</dbReference>
<dbReference type="GO" id="GO:0019677">
    <property type="term" value="P:NAD catabolic process"/>
    <property type="evidence" value="ECO:0000266"/>
    <property type="project" value="MGI"/>
</dbReference>
<dbReference type="GO" id="GO:0110155">
    <property type="term" value="P:NAD-cap decapping"/>
    <property type="evidence" value="ECO:0000314"/>
    <property type="project" value="UniProtKB"/>
</dbReference>
<dbReference type="GO" id="GO:0006742">
    <property type="term" value="P:NADP catabolic process"/>
    <property type="evidence" value="ECO:0000266"/>
    <property type="project" value="MGI"/>
</dbReference>
<dbReference type="CDD" id="cd03429">
    <property type="entry name" value="NUDIX_NADH_pyrophosphatase_Nudt13"/>
    <property type="match status" value="1"/>
</dbReference>
<dbReference type="FunFam" id="1.25.40.20:FF:001067">
    <property type="entry name" value="Nudix (Nucleoside diphosphate linked moiety X)-type motif 12 (Predicted)"/>
    <property type="match status" value="1"/>
</dbReference>
<dbReference type="FunFam" id="3.90.79.10:FF:000023">
    <property type="entry name" value="Peroxisomal NADH pyrophosphatase NUDT12"/>
    <property type="match status" value="1"/>
</dbReference>
<dbReference type="FunFam" id="3.90.79.20:FF:000002">
    <property type="entry name" value="Peroxisomal NADH pyrophosphatase NUDT12"/>
    <property type="match status" value="1"/>
</dbReference>
<dbReference type="Gene3D" id="3.90.79.20">
    <property type="match status" value="1"/>
</dbReference>
<dbReference type="Gene3D" id="1.25.40.20">
    <property type="entry name" value="Ankyrin repeat-containing domain"/>
    <property type="match status" value="1"/>
</dbReference>
<dbReference type="Gene3D" id="3.90.79.10">
    <property type="entry name" value="Nucleoside Triphosphate Pyrophosphohydrolase"/>
    <property type="match status" value="1"/>
</dbReference>
<dbReference type="InterPro" id="IPR002110">
    <property type="entry name" value="Ankyrin_rpt"/>
</dbReference>
<dbReference type="InterPro" id="IPR036770">
    <property type="entry name" value="Ankyrin_rpt-contain_sf"/>
</dbReference>
<dbReference type="InterPro" id="IPR050241">
    <property type="entry name" value="NAD-cap_RNA_hydrolase_NudC"/>
</dbReference>
<dbReference type="InterPro" id="IPR015375">
    <property type="entry name" value="NADH_PPase-like_N"/>
</dbReference>
<dbReference type="InterPro" id="IPR049734">
    <property type="entry name" value="NudC-like_C"/>
</dbReference>
<dbReference type="InterPro" id="IPR015797">
    <property type="entry name" value="NUDIX_hydrolase-like_dom_sf"/>
</dbReference>
<dbReference type="InterPro" id="IPR020084">
    <property type="entry name" value="NUDIX_hydrolase_CS"/>
</dbReference>
<dbReference type="InterPro" id="IPR000086">
    <property type="entry name" value="NUDIX_hydrolase_dom"/>
</dbReference>
<dbReference type="InterPro" id="IPR015376">
    <property type="entry name" value="Znr_NADH_PPase"/>
</dbReference>
<dbReference type="NCBIfam" id="NF001299">
    <property type="entry name" value="PRK00241.1"/>
    <property type="match status" value="1"/>
</dbReference>
<dbReference type="PANTHER" id="PTHR42904:SF6">
    <property type="entry name" value="NAD-CAPPED RNA HYDROLASE NUDT12"/>
    <property type="match status" value="1"/>
</dbReference>
<dbReference type="PANTHER" id="PTHR42904">
    <property type="entry name" value="NUDIX HYDROLASE, NUDC SUBFAMILY"/>
    <property type="match status" value="1"/>
</dbReference>
<dbReference type="Pfam" id="PF12796">
    <property type="entry name" value="Ank_2"/>
    <property type="match status" value="1"/>
</dbReference>
<dbReference type="Pfam" id="PF00293">
    <property type="entry name" value="NUDIX"/>
    <property type="match status" value="1"/>
</dbReference>
<dbReference type="Pfam" id="PF09296">
    <property type="entry name" value="NUDIX-like"/>
    <property type="match status" value="1"/>
</dbReference>
<dbReference type="Pfam" id="PF09297">
    <property type="entry name" value="Zn_ribbon_NUD"/>
    <property type="match status" value="1"/>
</dbReference>
<dbReference type="SMART" id="SM00248">
    <property type="entry name" value="ANK"/>
    <property type="match status" value="3"/>
</dbReference>
<dbReference type="SUPFAM" id="SSF48403">
    <property type="entry name" value="Ankyrin repeat"/>
    <property type="match status" value="1"/>
</dbReference>
<dbReference type="SUPFAM" id="SSF55811">
    <property type="entry name" value="Nudix"/>
    <property type="match status" value="1"/>
</dbReference>
<dbReference type="PROSITE" id="PS50297">
    <property type="entry name" value="ANK_REP_REGION"/>
    <property type="match status" value="1"/>
</dbReference>
<dbReference type="PROSITE" id="PS50088">
    <property type="entry name" value="ANK_REPEAT"/>
    <property type="match status" value="1"/>
</dbReference>
<dbReference type="PROSITE" id="PS51462">
    <property type="entry name" value="NUDIX"/>
    <property type="match status" value="1"/>
</dbReference>
<dbReference type="PROSITE" id="PS00893">
    <property type="entry name" value="NUDIX_BOX"/>
    <property type="match status" value="1"/>
</dbReference>
<gene>
    <name evidence="7 9" type="primary">Nudt12</name>
</gene>
<feature type="chain" id="PRO_0000056957" description="NAD-capped RNA hydrolase NUDT12">
    <location>
        <begin position="1"/>
        <end position="462"/>
    </location>
</feature>
<feature type="repeat" description="ANK 1">
    <location>
        <begin position="11"/>
        <end position="40"/>
    </location>
</feature>
<feature type="repeat" description="ANK 2">
    <location>
        <begin position="45"/>
        <end position="74"/>
    </location>
</feature>
<feature type="repeat" description="ANK 3">
    <location>
        <begin position="78"/>
        <end position="98"/>
    </location>
</feature>
<feature type="domain" description="Nudix hydrolase" evidence="2">
    <location>
        <begin position="319"/>
        <end position="453"/>
    </location>
</feature>
<feature type="short sequence motif" description="Nudix box">
    <location>
        <begin position="355"/>
        <end position="376"/>
    </location>
</feature>
<feature type="short sequence motif" description="Microbody targeting signal" evidence="1">
    <location>
        <begin position="460"/>
        <end position="462"/>
    </location>
</feature>
<feature type="binding site" evidence="3 10">
    <location>
        <position position="284"/>
    </location>
    <ligand>
        <name>Zn(2+)</name>
        <dbReference type="ChEBI" id="CHEBI:29105"/>
    </ligand>
</feature>
<feature type="binding site" evidence="3 10">
    <location>
        <position position="287"/>
    </location>
    <ligand>
        <name>Zn(2+)</name>
        <dbReference type="ChEBI" id="CHEBI:29105"/>
    </ligand>
</feature>
<feature type="binding site" evidence="3 10">
    <location>
        <position position="302"/>
    </location>
    <ligand>
        <name>Zn(2+)</name>
        <dbReference type="ChEBI" id="CHEBI:29105"/>
    </ligand>
</feature>
<feature type="binding site" evidence="3 10">
    <location>
        <position position="307"/>
    </location>
    <ligand>
        <name>Zn(2+)</name>
        <dbReference type="ChEBI" id="CHEBI:29105"/>
    </ligand>
</feature>
<feature type="binding site" evidence="3 10">
    <location>
        <position position="318"/>
    </location>
    <ligand>
        <name>substrate</name>
    </ligand>
</feature>
<feature type="binding site" evidence="3 10">
    <location>
        <begin position="354"/>
        <end position="356"/>
    </location>
    <ligand>
        <name>substrate</name>
    </ligand>
</feature>
<feature type="binding site" evidence="3 10">
    <location>
        <position position="354"/>
    </location>
    <ligand>
        <name>Mg(2+)</name>
        <dbReference type="ChEBI" id="CHEBI:18420"/>
        <label>1</label>
    </ligand>
</feature>
<feature type="binding site" evidence="3 10">
    <location>
        <position position="370"/>
    </location>
    <ligand>
        <name>Mg(2+)</name>
        <dbReference type="ChEBI" id="CHEBI:18420"/>
        <label>2</label>
    </ligand>
</feature>
<feature type="binding site" evidence="3 10">
    <location>
        <position position="370"/>
    </location>
    <ligand>
        <name>Mg(2+)</name>
        <dbReference type="ChEBI" id="CHEBI:18420"/>
        <label>3</label>
    </ligand>
</feature>
<feature type="binding site" evidence="3 10">
    <location>
        <position position="370"/>
    </location>
    <ligand>
        <name>substrate</name>
    </ligand>
</feature>
<feature type="binding site" evidence="3 10">
    <location>
        <position position="374"/>
    </location>
    <ligand>
        <name>Mg(2+)</name>
        <dbReference type="ChEBI" id="CHEBI:18420"/>
        <label>1</label>
    </ligand>
</feature>
<feature type="binding site" evidence="3 10">
    <location>
        <position position="374"/>
    </location>
    <ligand>
        <name>Mg(2+)</name>
        <dbReference type="ChEBI" id="CHEBI:18420"/>
        <label>3</label>
    </ligand>
</feature>
<feature type="binding site" evidence="3 10">
    <location>
        <position position="374"/>
    </location>
    <ligand>
        <name>substrate</name>
    </ligand>
</feature>
<feature type="binding site" evidence="3 10">
    <location>
        <position position="415"/>
    </location>
    <ligand>
        <name>Mg(2+)</name>
        <dbReference type="ChEBI" id="CHEBI:18420"/>
        <label>1</label>
    </ligand>
</feature>
<feature type="binding site" evidence="3 10">
    <location>
        <position position="415"/>
    </location>
    <ligand>
        <name>Mg(2+)</name>
        <dbReference type="ChEBI" id="CHEBI:18420"/>
        <label>3</label>
    </ligand>
</feature>
<feature type="binding site" evidence="3 10">
    <location>
        <position position="415"/>
    </location>
    <ligand>
        <name>substrate</name>
    </ligand>
</feature>
<feature type="modified residue" description="N6-succinyllysine" evidence="11">
    <location>
        <position position="10"/>
    </location>
</feature>
<feature type="modified residue" description="N6-succinyllysine" evidence="11">
    <location>
        <position position="185"/>
    </location>
</feature>
<feature type="modified residue" description="N6-succinyllysine" evidence="11">
    <location>
        <position position="292"/>
    </location>
</feature>
<feature type="splice variant" id="VSP_014280" description="In isoform 2." evidence="6">
    <original>ETIEDAV</original>
    <variation>KPILTGF</variation>
    <location>
        <begin position="361"/>
        <end position="367"/>
    </location>
</feature>
<feature type="splice variant" id="VSP_014281" description="In isoform 2." evidence="6">
    <location>
        <begin position="368"/>
        <end position="462"/>
    </location>
</feature>
<feature type="mutagenesis site" description="Abolished deNADding activity." evidence="3">
    <original>EE</original>
    <variation>QQ</variation>
    <location>
        <begin position="373"/>
        <end position="374"/>
    </location>
</feature>
<feature type="sequence conflict" description="In Ref. 2; AAH57657." evidence="8" ref="2">
    <original>A</original>
    <variation>G</variation>
    <location>
        <position position="78"/>
    </location>
</feature>
<feature type="sequence conflict" description="In Ref. 2; AAH57657." evidence="8" ref="2">
    <original>A</original>
    <variation>V</variation>
    <location>
        <position position="290"/>
    </location>
</feature>
<feature type="helix" evidence="12">
    <location>
        <begin position="130"/>
        <end position="132"/>
    </location>
</feature>
<feature type="helix" evidence="12">
    <location>
        <begin position="136"/>
        <end position="143"/>
    </location>
</feature>
<feature type="strand" evidence="12">
    <location>
        <begin position="149"/>
        <end position="154"/>
    </location>
</feature>
<feature type="strand" evidence="12">
    <location>
        <begin position="157"/>
        <end position="162"/>
    </location>
</feature>
<feature type="helix" evidence="12">
    <location>
        <begin position="166"/>
        <end position="168"/>
    </location>
</feature>
<feature type="strand" evidence="12">
    <location>
        <begin position="169"/>
        <end position="171"/>
    </location>
</feature>
<feature type="strand" evidence="12">
    <location>
        <begin position="174"/>
        <end position="176"/>
    </location>
</feature>
<feature type="helix" evidence="12">
    <location>
        <begin position="181"/>
        <end position="188"/>
    </location>
</feature>
<feature type="helix" evidence="12">
    <location>
        <begin position="191"/>
        <end position="193"/>
    </location>
</feature>
<feature type="strand" evidence="12">
    <location>
        <begin position="195"/>
        <end position="202"/>
    </location>
</feature>
<feature type="strand" evidence="12">
    <location>
        <begin position="226"/>
        <end position="232"/>
    </location>
</feature>
<feature type="turn" evidence="12">
    <location>
        <begin position="234"/>
        <end position="236"/>
    </location>
</feature>
<feature type="helix" evidence="12">
    <location>
        <begin position="238"/>
        <end position="241"/>
    </location>
</feature>
<feature type="strand" evidence="12">
    <location>
        <begin position="247"/>
        <end position="249"/>
    </location>
</feature>
<feature type="helix" evidence="12">
    <location>
        <begin position="253"/>
        <end position="256"/>
    </location>
</feature>
<feature type="helix" evidence="12">
    <location>
        <begin position="257"/>
        <end position="259"/>
    </location>
</feature>
<feature type="helix" evidence="12">
    <location>
        <begin position="262"/>
        <end position="280"/>
    </location>
</feature>
<feature type="turn" evidence="12">
    <location>
        <begin position="285"/>
        <end position="287"/>
    </location>
</feature>
<feature type="strand" evidence="12">
    <location>
        <begin position="290"/>
        <end position="294"/>
    </location>
</feature>
<feature type="helix" evidence="12">
    <location>
        <begin position="295"/>
        <end position="297"/>
    </location>
</feature>
<feature type="strand" evidence="12">
    <location>
        <begin position="299"/>
        <end position="303"/>
    </location>
</feature>
<feature type="helix" evidence="12">
    <location>
        <begin position="308"/>
        <end position="310"/>
    </location>
</feature>
<feature type="helix" evidence="12">
    <location>
        <begin position="315"/>
        <end position="317"/>
    </location>
</feature>
<feature type="strand" evidence="12">
    <location>
        <begin position="322"/>
        <end position="330"/>
    </location>
</feature>
<feature type="strand" evidence="12">
    <location>
        <begin position="334"/>
        <end position="341"/>
    </location>
</feature>
<feature type="strand" evidence="12">
    <location>
        <begin position="353"/>
        <end position="356"/>
    </location>
</feature>
<feature type="helix" evidence="12">
    <location>
        <begin position="363"/>
        <end position="375"/>
    </location>
</feature>
<feature type="strand" evidence="12">
    <location>
        <begin position="379"/>
        <end position="390"/>
    </location>
</feature>
<feature type="turn" evidence="12">
    <location>
        <begin position="391"/>
        <end position="394"/>
    </location>
</feature>
<feature type="strand" evidence="12">
    <location>
        <begin position="395"/>
        <end position="405"/>
    </location>
</feature>
<feature type="strand" evidence="12">
    <location>
        <begin position="413"/>
        <end position="415"/>
    </location>
</feature>
<feature type="strand" evidence="12">
    <location>
        <begin position="417"/>
        <end position="423"/>
    </location>
</feature>
<feature type="helix" evidence="12">
    <location>
        <begin position="424"/>
        <end position="431"/>
    </location>
</feature>
<feature type="helix" evidence="12">
    <location>
        <begin position="447"/>
        <end position="456"/>
    </location>
</feature>
<organism>
    <name type="scientific">Mus musculus</name>
    <name type="common">Mouse</name>
    <dbReference type="NCBI Taxonomy" id="10090"/>
    <lineage>
        <taxon>Eukaryota</taxon>
        <taxon>Metazoa</taxon>
        <taxon>Chordata</taxon>
        <taxon>Craniata</taxon>
        <taxon>Vertebrata</taxon>
        <taxon>Euteleostomi</taxon>
        <taxon>Mammalia</taxon>
        <taxon>Eutheria</taxon>
        <taxon>Euarchontoglires</taxon>
        <taxon>Glires</taxon>
        <taxon>Rodentia</taxon>
        <taxon>Myomorpha</taxon>
        <taxon>Muroidea</taxon>
        <taxon>Muridae</taxon>
        <taxon>Murinae</taxon>
        <taxon>Mus</taxon>
        <taxon>Mus</taxon>
    </lineage>
</organism>
<keyword id="KW-0002">3D-structure</keyword>
<keyword id="KW-0025">Alternative splicing</keyword>
<keyword id="KW-0040">ANK repeat</keyword>
<keyword id="KW-0963">Cytoplasm</keyword>
<keyword id="KW-0378">Hydrolase</keyword>
<keyword id="KW-0460">Magnesium</keyword>
<keyword id="KW-0479">Metal-binding</keyword>
<keyword id="KW-0520">NAD</keyword>
<keyword id="KW-0521">NADP</keyword>
<keyword id="KW-0576">Peroxisome</keyword>
<keyword id="KW-1185">Reference proteome</keyword>
<keyword id="KW-0677">Repeat</keyword>
<keyword id="KW-0862">Zinc</keyword>
<name>NUD12_MOUSE</name>
<comment type="function">
    <text evidence="1 3 4">mRNA decapping enzyme that specifically removes the nicotinamide adenine dinucleotide (NAD) cap from a subset of mRNAs by hydrolyzing the diphosphate linkage to produce nicotinamide mononucleotide (NMN) and 5' monophosphate mRNA (PubMed:31101919, PubMed:32432673). The NAD-cap is present at the 5'-end of some RNAs; in contrast to the canonical N7 methylguanosine (m7G) cap, the NAD cap promotes mRNA decay (PubMed:31101919). Preferentially acts on NAD-capped transcripts in response to nutrient stress (PubMed:31101919). Also acts on free nicotinamide adenine dinucleotide molecules: hydrolyzes NAD(H) into NMN(H) and AMP, and NADPH into NMNH and 2',5'-ADP (By similarity). May act to regulate the concentration of peroxisomal nicotinamide nucleotide cofactors required for oxidative metabolism in this organelle (By similarity). Regulates the levels of circadian clock components PER1, PER2, PER3 and CRY2 in the liver (PubMed:31875550).</text>
</comment>
<comment type="catalytic activity">
    <reaction evidence="3 5">
        <text>a 5'-end NAD(+)-phospho-ribonucleoside in mRNA + H2O = a 5'-end phospho-adenosine-phospho-ribonucleoside in mRNA + beta-nicotinamide D-ribonucleotide + 2 H(+)</text>
        <dbReference type="Rhea" id="RHEA:60876"/>
        <dbReference type="Rhea" id="RHEA-COMP:15698"/>
        <dbReference type="Rhea" id="RHEA-COMP:15719"/>
        <dbReference type="ChEBI" id="CHEBI:14649"/>
        <dbReference type="ChEBI" id="CHEBI:15377"/>
        <dbReference type="ChEBI" id="CHEBI:15378"/>
        <dbReference type="ChEBI" id="CHEBI:144029"/>
        <dbReference type="ChEBI" id="CHEBI:144051"/>
    </reaction>
    <physiologicalReaction direction="left-to-right" evidence="3">
        <dbReference type="Rhea" id="RHEA:60877"/>
    </physiologicalReaction>
</comment>
<comment type="catalytic activity">
    <reaction evidence="3">
        <text>NAD(+) + H2O = beta-nicotinamide D-ribonucleotide + AMP + 2 H(+)</text>
        <dbReference type="Rhea" id="RHEA:11800"/>
        <dbReference type="ChEBI" id="CHEBI:14649"/>
        <dbReference type="ChEBI" id="CHEBI:15377"/>
        <dbReference type="ChEBI" id="CHEBI:15378"/>
        <dbReference type="ChEBI" id="CHEBI:57540"/>
        <dbReference type="ChEBI" id="CHEBI:456215"/>
        <dbReference type="EC" id="3.6.1.22"/>
    </reaction>
    <physiologicalReaction direction="left-to-right" evidence="3">
        <dbReference type="Rhea" id="RHEA:11801"/>
    </physiologicalReaction>
</comment>
<comment type="catalytic activity">
    <reaction evidence="1">
        <text>NADH + H2O = reduced beta-nicotinamide D-ribonucleotide + AMP + 2 H(+)</text>
        <dbReference type="Rhea" id="RHEA:48868"/>
        <dbReference type="ChEBI" id="CHEBI:15377"/>
        <dbReference type="ChEBI" id="CHEBI:15378"/>
        <dbReference type="ChEBI" id="CHEBI:57945"/>
        <dbReference type="ChEBI" id="CHEBI:90832"/>
        <dbReference type="ChEBI" id="CHEBI:456215"/>
        <dbReference type="EC" id="3.6.1.22"/>
    </reaction>
    <physiologicalReaction direction="left-to-right" evidence="1">
        <dbReference type="Rhea" id="RHEA:48869"/>
    </physiologicalReaction>
</comment>
<comment type="catalytic activity">
    <reaction evidence="1">
        <text>NADPH + H2O = reduced beta-nicotinamide D-ribonucleotide + adenosine 2',5'-bisphosphate + 2 H(+)</text>
        <dbReference type="Rhea" id="RHEA:60820"/>
        <dbReference type="ChEBI" id="CHEBI:15377"/>
        <dbReference type="ChEBI" id="CHEBI:15378"/>
        <dbReference type="ChEBI" id="CHEBI:57783"/>
        <dbReference type="ChEBI" id="CHEBI:90832"/>
        <dbReference type="ChEBI" id="CHEBI:194156"/>
    </reaction>
    <physiologicalReaction direction="left-to-right" evidence="1">
        <dbReference type="Rhea" id="RHEA:60821"/>
    </physiologicalReaction>
</comment>
<comment type="cofactor">
    <cofactor evidence="3">
        <name>Mg(2+)</name>
        <dbReference type="ChEBI" id="CHEBI:18420"/>
    </cofactor>
    <text evidence="3">Binds 3 Mg(2+) ions per subunit.</text>
</comment>
<comment type="cofactor">
    <cofactor evidence="3">
        <name>Zn(2+)</name>
        <dbReference type="ChEBI" id="CHEBI:29105"/>
    </cofactor>
    <text evidence="3">Binds 1 zinc ion per subunit.</text>
</comment>
<comment type="subunit">
    <text evidence="1 3">Homodimer (PubMed:31101919). Homodimerization is essential for its catalytic activity and protein stability (By similarity). Interacts (via ANK repeats) with BLMH (By similarity).</text>
</comment>
<comment type="subcellular location">
    <subcellularLocation>
        <location evidence="1">Cytoplasm</location>
    </subcellularLocation>
    <subcellularLocation>
        <location evidence="1">Peroxisome</location>
    </subcellularLocation>
    <subcellularLocation>
        <location evidence="1">Cytoplasmic granule</location>
    </subcellularLocation>
    <text evidence="1">Localizes to cytoplasmic granules in the presence of BLMH.</text>
</comment>
<comment type="alternative products">
    <event type="alternative splicing"/>
    <isoform>
        <id>Q9DCN1-1</id>
        <name>1</name>
        <sequence type="displayed"/>
    </isoform>
    <isoform>
        <id>Q9DCN1-2</id>
        <name>2</name>
        <sequence type="described" ref="VSP_014280 VSP_014281"/>
    </isoform>
</comment>
<comment type="tissue specificity">
    <text evidence="4">Expressed abundantly in the liver and kidney.</text>
</comment>
<comment type="similarity">
    <text evidence="8">Belongs to the Nudix hydrolase family. NudC subfamily.</text>
</comment>
<accession>Q9DCN1</accession>
<accession>Q6PFA5</accession>
<proteinExistence type="evidence at protein level"/>
<protein>
    <recommendedName>
        <fullName evidence="8">NAD-capped RNA hydrolase NUDT12</fullName>
        <shortName evidence="8">DeNADding enzyme NUDT12</shortName>
        <ecNumber evidence="3 5">3.6.1.-</ecNumber>
    </recommendedName>
    <alternativeName>
        <fullName evidence="8">NADH pyrophosphatase NUDT12</fullName>
        <ecNumber evidence="1">3.6.1.22</ecNumber>
    </alternativeName>
    <alternativeName>
        <fullName evidence="8">Nucleoside diphosphate-linked moiety X motif 12</fullName>
        <shortName evidence="8">Nudix motif 12</shortName>
    </alternativeName>
</protein>
<evidence type="ECO:0000250" key="1">
    <source>
        <dbReference type="UniProtKB" id="Q9BQG2"/>
    </source>
</evidence>
<evidence type="ECO:0000255" key="2">
    <source>
        <dbReference type="PROSITE-ProRule" id="PRU00794"/>
    </source>
</evidence>
<evidence type="ECO:0000269" key="3">
    <source>
    </source>
</evidence>
<evidence type="ECO:0000269" key="4">
    <source>
    </source>
</evidence>
<evidence type="ECO:0000269" key="5">
    <source>
    </source>
</evidence>
<evidence type="ECO:0000303" key="6">
    <source>
    </source>
</evidence>
<evidence type="ECO:0000303" key="7">
    <source>
    </source>
</evidence>
<evidence type="ECO:0000305" key="8"/>
<evidence type="ECO:0000312" key="9">
    <source>
        <dbReference type="MGI" id="MGI:1915243"/>
    </source>
</evidence>
<evidence type="ECO:0007744" key="10">
    <source>
        <dbReference type="PDB" id="6O3P"/>
    </source>
</evidence>
<evidence type="ECO:0007744" key="11">
    <source>
    </source>
</evidence>
<evidence type="ECO:0007829" key="12">
    <source>
        <dbReference type="PDB" id="6O3P"/>
    </source>
</evidence>
<reference key="1">
    <citation type="journal article" date="2005" name="Science">
        <title>The transcriptional landscape of the mammalian genome.</title>
        <authorList>
            <person name="Carninci P."/>
            <person name="Kasukawa T."/>
            <person name="Katayama S."/>
            <person name="Gough J."/>
            <person name="Frith M.C."/>
            <person name="Maeda N."/>
            <person name="Oyama R."/>
            <person name="Ravasi T."/>
            <person name="Lenhard B."/>
            <person name="Wells C."/>
            <person name="Kodzius R."/>
            <person name="Shimokawa K."/>
            <person name="Bajic V.B."/>
            <person name="Brenner S.E."/>
            <person name="Batalov S."/>
            <person name="Forrest A.R."/>
            <person name="Zavolan M."/>
            <person name="Davis M.J."/>
            <person name="Wilming L.G."/>
            <person name="Aidinis V."/>
            <person name="Allen J.E."/>
            <person name="Ambesi-Impiombato A."/>
            <person name="Apweiler R."/>
            <person name="Aturaliya R.N."/>
            <person name="Bailey T.L."/>
            <person name="Bansal M."/>
            <person name="Baxter L."/>
            <person name="Beisel K.W."/>
            <person name="Bersano T."/>
            <person name="Bono H."/>
            <person name="Chalk A.M."/>
            <person name="Chiu K.P."/>
            <person name="Choudhary V."/>
            <person name="Christoffels A."/>
            <person name="Clutterbuck D.R."/>
            <person name="Crowe M.L."/>
            <person name="Dalla E."/>
            <person name="Dalrymple B.P."/>
            <person name="de Bono B."/>
            <person name="Della Gatta G."/>
            <person name="di Bernardo D."/>
            <person name="Down T."/>
            <person name="Engstrom P."/>
            <person name="Fagiolini M."/>
            <person name="Faulkner G."/>
            <person name="Fletcher C.F."/>
            <person name="Fukushima T."/>
            <person name="Furuno M."/>
            <person name="Futaki S."/>
            <person name="Gariboldi M."/>
            <person name="Georgii-Hemming P."/>
            <person name="Gingeras T.R."/>
            <person name="Gojobori T."/>
            <person name="Green R.E."/>
            <person name="Gustincich S."/>
            <person name="Harbers M."/>
            <person name="Hayashi Y."/>
            <person name="Hensch T.K."/>
            <person name="Hirokawa N."/>
            <person name="Hill D."/>
            <person name="Huminiecki L."/>
            <person name="Iacono M."/>
            <person name="Ikeo K."/>
            <person name="Iwama A."/>
            <person name="Ishikawa T."/>
            <person name="Jakt M."/>
            <person name="Kanapin A."/>
            <person name="Katoh M."/>
            <person name="Kawasawa Y."/>
            <person name="Kelso J."/>
            <person name="Kitamura H."/>
            <person name="Kitano H."/>
            <person name="Kollias G."/>
            <person name="Krishnan S.P."/>
            <person name="Kruger A."/>
            <person name="Kummerfeld S.K."/>
            <person name="Kurochkin I.V."/>
            <person name="Lareau L.F."/>
            <person name="Lazarevic D."/>
            <person name="Lipovich L."/>
            <person name="Liu J."/>
            <person name="Liuni S."/>
            <person name="McWilliam S."/>
            <person name="Madan Babu M."/>
            <person name="Madera M."/>
            <person name="Marchionni L."/>
            <person name="Matsuda H."/>
            <person name="Matsuzawa S."/>
            <person name="Miki H."/>
            <person name="Mignone F."/>
            <person name="Miyake S."/>
            <person name="Morris K."/>
            <person name="Mottagui-Tabar S."/>
            <person name="Mulder N."/>
            <person name="Nakano N."/>
            <person name="Nakauchi H."/>
            <person name="Ng P."/>
            <person name="Nilsson R."/>
            <person name="Nishiguchi S."/>
            <person name="Nishikawa S."/>
            <person name="Nori F."/>
            <person name="Ohara O."/>
            <person name="Okazaki Y."/>
            <person name="Orlando V."/>
            <person name="Pang K.C."/>
            <person name="Pavan W.J."/>
            <person name="Pavesi G."/>
            <person name="Pesole G."/>
            <person name="Petrovsky N."/>
            <person name="Piazza S."/>
            <person name="Reed J."/>
            <person name="Reid J.F."/>
            <person name="Ring B.Z."/>
            <person name="Ringwald M."/>
            <person name="Rost B."/>
            <person name="Ruan Y."/>
            <person name="Salzberg S.L."/>
            <person name="Sandelin A."/>
            <person name="Schneider C."/>
            <person name="Schoenbach C."/>
            <person name="Sekiguchi K."/>
            <person name="Semple C.A."/>
            <person name="Seno S."/>
            <person name="Sessa L."/>
            <person name="Sheng Y."/>
            <person name="Shibata Y."/>
            <person name="Shimada H."/>
            <person name="Shimada K."/>
            <person name="Silva D."/>
            <person name="Sinclair B."/>
            <person name="Sperling S."/>
            <person name="Stupka E."/>
            <person name="Sugiura K."/>
            <person name="Sultana R."/>
            <person name="Takenaka Y."/>
            <person name="Taki K."/>
            <person name="Tammoja K."/>
            <person name="Tan S.L."/>
            <person name="Tang S."/>
            <person name="Taylor M.S."/>
            <person name="Tegner J."/>
            <person name="Teichmann S.A."/>
            <person name="Ueda H.R."/>
            <person name="van Nimwegen E."/>
            <person name="Verardo R."/>
            <person name="Wei C.L."/>
            <person name="Yagi K."/>
            <person name="Yamanishi H."/>
            <person name="Zabarovsky E."/>
            <person name="Zhu S."/>
            <person name="Zimmer A."/>
            <person name="Hide W."/>
            <person name="Bult C."/>
            <person name="Grimmond S.M."/>
            <person name="Teasdale R.D."/>
            <person name="Liu E.T."/>
            <person name="Brusic V."/>
            <person name="Quackenbush J."/>
            <person name="Wahlestedt C."/>
            <person name="Mattick J.S."/>
            <person name="Hume D.A."/>
            <person name="Kai C."/>
            <person name="Sasaki D."/>
            <person name="Tomaru Y."/>
            <person name="Fukuda S."/>
            <person name="Kanamori-Katayama M."/>
            <person name="Suzuki M."/>
            <person name="Aoki J."/>
            <person name="Arakawa T."/>
            <person name="Iida J."/>
            <person name="Imamura K."/>
            <person name="Itoh M."/>
            <person name="Kato T."/>
            <person name="Kawaji H."/>
            <person name="Kawagashira N."/>
            <person name="Kawashima T."/>
            <person name="Kojima M."/>
            <person name="Kondo S."/>
            <person name="Konno H."/>
            <person name="Nakano K."/>
            <person name="Ninomiya N."/>
            <person name="Nishio T."/>
            <person name="Okada M."/>
            <person name="Plessy C."/>
            <person name="Shibata K."/>
            <person name="Shiraki T."/>
            <person name="Suzuki S."/>
            <person name="Tagami M."/>
            <person name="Waki K."/>
            <person name="Watahiki A."/>
            <person name="Okamura-Oho Y."/>
            <person name="Suzuki H."/>
            <person name="Kawai J."/>
            <person name="Hayashizaki Y."/>
        </authorList>
    </citation>
    <scope>NUCLEOTIDE SEQUENCE [LARGE SCALE MRNA] (ISOFORM 1)</scope>
    <source>
        <strain>C57BL/6J</strain>
        <tissue>Kidney</tissue>
    </source>
</reference>
<reference key="2">
    <citation type="journal article" date="2004" name="Genome Res.">
        <title>The status, quality, and expansion of the NIH full-length cDNA project: the Mammalian Gene Collection (MGC).</title>
        <authorList>
            <consortium name="The MGC Project Team"/>
        </authorList>
    </citation>
    <scope>NUCLEOTIDE SEQUENCE [LARGE SCALE MRNA] (ISOFORM 2)</scope>
    <source>
        <strain>Czech II</strain>
        <tissue>Mammary tumor</tissue>
    </source>
</reference>
<reference key="3">
    <citation type="journal article" date="2010" name="Cell">
        <title>A tissue-specific atlas of mouse protein phosphorylation and expression.</title>
        <authorList>
            <person name="Huttlin E.L."/>
            <person name="Jedrychowski M.P."/>
            <person name="Elias J.E."/>
            <person name="Goswami T."/>
            <person name="Rad R."/>
            <person name="Beausoleil S.A."/>
            <person name="Villen J."/>
            <person name="Haas W."/>
            <person name="Sowa M.E."/>
            <person name="Gygi S.P."/>
        </authorList>
    </citation>
    <scope>IDENTIFICATION BY MASS SPECTROMETRY [LARGE SCALE ANALYSIS]</scope>
    <source>
        <tissue>Brown adipose tissue</tissue>
        <tissue>Kidney</tissue>
        <tissue>Liver</tissue>
        <tissue>Lung</tissue>
        <tissue>Testis</tissue>
    </source>
</reference>
<reference key="4">
    <citation type="journal article" date="2013" name="Mol. Cell">
        <title>SIRT5-mediated lysine desuccinylation impacts diverse metabolic pathways.</title>
        <authorList>
            <person name="Park J."/>
            <person name="Chen Y."/>
            <person name="Tishkoff D.X."/>
            <person name="Peng C."/>
            <person name="Tan M."/>
            <person name="Dai L."/>
            <person name="Xie Z."/>
            <person name="Zhang Y."/>
            <person name="Zwaans B.M."/>
            <person name="Skinner M.E."/>
            <person name="Lombard D.B."/>
            <person name="Zhao Y."/>
        </authorList>
    </citation>
    <scope>SUCCINYLATION [LARGE SCALE ANALYSIS] AT LYS-10; LYS-185 AND LYS-292</scope>
    <scope>IDENTIFICATION BY MASS SPECTROMETRY [LARGE SCALE ANALYSIS]</scope>
    <source>
        <tissue>Liver</tissue>
    </source>
</reference>
<reference key="5">
    <citation type="journal article" date="2020" name="Nucleic Acids Res.">
        <title>Mammalian Nudix proteins cleave nucleotide metabolite caps on RNAs.</title>
        <authorList>
            <person name="Sharma S."/>
            <person name="Grudzien-Nogalska E."/>
            <person name="Hamilton K."/>
            <person name="Jiao X."/>
            <person name="Yang J."/>
            <person name="Tong L."/>
            <person name="Kiledjian M."/>
        </authorList>
    </citation>
    <scope>FUNCTION</scope>
    <scope>CATALYTIC ACTIVITY</scope>
</reference>
<reference key="6">
    <citation type="journal article" date="2019" name="Cell Rep.">
        <title>Decapping Enzyme NUDT12 Partners with BLMH for Cytoplasmic Surveillance of NAD-Capped RNAs.</title>
        <authorList>
            <person name="Wu H."/>
            <person name="Li L."/>
            <person name="Chen K.M."/>
            <person name="Homolka D."/>
            <person name="Gos P."/>
            <person name="Fleury-Olela F."/>
            <person name="McCarthy A.A."/>
            <person name="Pillai R.S."/>
        </authorList>
    </citation>
    <scope>FUNCTION</scope>
    <scope>TISSUE SPECIFICITY</scope>
</reference>
<reference key="7">
    <citation type="journal article" date="2019" name="Nat. Chem. Biol.">
        <title>Structural and mechanistic basis of mammalian Nudt12 RNA deNADding.</title>
        <authorList>
            <person name="Grudzien-Nogalska E."/>
            <person name="Wu Y."/>
            <person name="Jiao X."/>
            <person name="Cui H."/>
            <person name="Mateyak M.K."/>
            <person name="Hart R.P."/>
            <person name="Tong L."/>
            <person name="Kiledjian M."/>
        </authorList>
    </citation>
    <scope>X-RAY CRYSTALLOGRAPHY (1.6 ANGSTROMS) OF 131-457 IN COMPLEX WITH AMP; MAGNESIUM AND ZINC</scope>
    <scope>FUNCTION</scope>
    <scope>CATALYTIC ACTIVITY</scope>
    <scope>COFACTOR</scope>
    <scope>SUBUNIT</scope>
    <scope>MUTAGENESIS OF 373-GLU-GLU-374</scope>
</reference>
<sequence>MSSVKRNPKKEMISELHSSAAEGNVAKLAGILSHSPSLLNETSENGWTALMYAARNGHPDVVQFLLEKGCDRSLVNKARQTALDIAAFWGYRHIANLLANAKGGKKPWFLTNEVDECENYFSRTLLDRRSDKRNNSDWLQAKESHPTTVYLLFSDLNPLVTLGGNKESSQQPEVRLCQLNYPDVKGYLAQPEKITLVFLGVELEMRKGSPAQAGGVPEEEEDGLVAWFALGIEPGAAEEFKQRHENCYFLHPPMPALLQLKEKEAGVVAQARSVLAWHSRYKFCPTCGSATKIEEGGYKRVCVRETCPSLQGVHNTSYPRVDPVVIMQVIHPDGTKCLLGRQKRFPPGMFTCLAGFIEPGETIEDAVRREVEEESGVKVGHVQYVSCQPWPMPSSLMIGCLAVAVSTEIKVDKNEIEDARWFTREQVVDVLTKGKQQAFFVPPSRAIAHQLIKHWVGMNPNL</sequence>